<dbReference type="EMBL" id="CP000284">
    <property type="protein sequence ID" value="ABE49019.1"/>
    <property type="molecule type" value="Genomic_DNA"/>
</dbReference>
<dbReference type="RefSeq" id="WP_011479116.1">
    <property type="nucleotide sequence ID" value="NC_007947.1"/>
</dbReference>
<dbReference type="SMR" id="Q1H3B8"/>
<dbReference type="STRING" id="265072.Mfla_0751"/>
<dbReference type="KEGG" id="mfa:Mfla_0751"/>
<dbReference type="eggNOG" id="COG0443">
    <property type="taxonomic scope" value="Bacteria"/>
</dbReference>
<dbReference type="HOGENOM" id="CLU_005965_2_1_4"/>
<dbReference type="OrthoDB" id="9766019at2"/>
<dbReference type="Proteomes" id="UP000002440">
    <property type="component" value="Chromosome"/>
</dbReference>
<dbReference type="GO" id="GO:0005524">
    <property type="term" value="F:ATP binding"/>
    <property type="evidence" value="ECO:0007669"/>
    <property type="project" value="UniProtKB-UniRule"/>
</dbReference>
<dbReference type="GO" id="GO:0140662">
    <property type="term" value="F:ATP-dependent protein folding chaperone"/>
    <property type="evidence" value="ECO:0007669"/>
    <property type="project" value="InterPro"/>
</dbReference>
<dbReference type="GO" id="GO:0051082">
    <property type="term" value="F:unfolded protein binding"/>
    <property type="evidence" value="ECO:0007669"/>
    <property type="project" value="InterPro"/>
</dbReference>
<dbReference type="CDD" id="cd10234">
    <property type="entry name" value="ASKHA_NBD_HSP70_DnaK-like"/>
    <property type="match status" value="1"/>
</dbReference>
<dbReference type="FunFam" id="2.60.34.10:FF:000014">
    <property type="entry name" value="Chaperone protein DnaK HSP70"/>
    <property type="match status" value="1"/>
</dbReference>
<dbReference type="FunFam" id="1.20.1270.10:FF:000001">
    <property type="entry name" value="Molecular chaperone DnaK"/>
    <property type="match status" value="1"/>
</dbReference>
<dbReference type="FunFam" id="3.30.420.40:FF:000004">
    <property type="entry name" value="Molecular chaperone DnaK"/>
    <property type="match status" value="1"/>
</dbReference>
<dbReference type="FunFam" id="3.90.640.10:FF:000003">
    <property type="entry name" value="Molecular chaperone DnaK"/>
    <property type="match status" value="1"/>
</dbReference>
<dbReference type="Gene3D" id="1.20.1270.10">
    <property type="match status" value="1"/>
</dbReference>
<dbReference type="Gene3D" id="3.30.420.40">
    <property type="match status" value="2"/>
</dbReference>
<dbReference type="Gene3D" id="3.90.640.10">
    <property type="entry name" value="Actin, Chain A, domain 4"/>
    <property type="match status" value="1"/>
</dbReference>
<dbReference type="Gene3D" id="2.60.34.10">
    <property type="entry name" value="Substrate Binding Domain Of DNAk, Chain A, domain 1"/>
    <property type="match status" value="1"/>
</dbReference>
<dbReference type="HAMAP" id="MF_00332">
    <property type="entry name" value="DnaK"/>
    <property type="match status" value="1"/>
</dbReference>
<dbReference type="InterPro" id="IPR043129">
    <property type="entry name" value="ATPase_NBD"/>
</dbReference>
<dbReference type="InterPro" id="IPR012725">
    <property type="entry name" value="Chaperone_DnaK"/>
</dbReference>
<dbReference type="InterPro" id="IPR018181">
    <property type="entry name" value="Heat_shock_70_CS"/>
</dbReference>
<dbReference type="InterPro" id="IPR029048">
    <property type="entry name" value="HSP70_C_sf"/>
</dbReference>
<dbReference type="InterPro" id="IPR029047">
    <property type="entry name" value="HSP70_peptide-bd_sf"/>
</dbReference>
<dbReference type="InterPro" id="IPR013126">
    <property type="entry name" value="Hsp_70_fam"/>
</dbReference>
<dbReference type="NCBIfam" id="NF001413">
    <property type="entry name" value="PRK00290.1"/>
    <property type="match status" value="1"/>
</dbReference>
<dbReference type="NCBIfam" id="NF003520">
    <property type="entry name" value="PRK05183.1"/>
    <property type="match status" value="1"/>
</dbReference>
<dbReference type="NCBIfam" id="TIGR02350">
    <property type="entry name" value="prok_dnaK"/>
    <property type="match status" value="1"/>
</dbReference>
<dbReference type="PANTHER" id="PTHR19375">
    <property type="entry name" value="HEAT SHOCK PROTEIN 70KDA"/>
    <property type="match status" value="1"/>
</dbReference>
<dbReference type="Pfam" id="PF00012">
    <property type="entry name" value="HSP70"/>
    <property type="match status" value="1"/>
</dbReference>
<dbReference type="PRINTS" id="PR00301">
    <property type="entry name" value="HEATSHOCK70"/>
</dbReference>
<dbReference type="SUPFAM" id="SSF53067">
    <property type="entry name" value="Actin-like ATPase domain"/>
    <property type="match status" value="2"/>
</dbReference>
<dbReference type="SUPFAM" id="SSF100934">
    <property type="entry name" value="Heat shock protein 70kD (HSP70), C-terminal subdomain"/>
    <property type="match status" value="1"/>
</dbReference>
<dbReference type="SUPFAM" id="SSF100920">
    <property type="entry name" value="Heat shock protein 70kD (HSP70), peptide-binding domain"/>
    <property type="match status" value="1"/>
</dbReference>
<dbReference type="PROSITE" id="PS00297">
    <property type="entry name" value="HSP70_1"/>
    <property type="match status" value="1"/>
</dbReference>
<dbReference type="PROSITE" id="PS00329">
    <property type="entry name" value="HSP70_2"/>
    <property type="match status" value="1"/>
</dbReference>
<dbReference type="PROSITE" id="PS01036">
    <property type="entry name" value="HSP70_3"/>
    <property type="match status" value="1"/>
</dbReference>
<evidence type="ECO:0000255" key="1">
    <source>
        <dbReference type="HAMAP-Rule" id="MF_00332"/>
    </source>
</evidence>
<evidence type="ECO:0000256" key="2">
    <source>
        <dbReference type="SAM" id="MobiDB-lite"/>
    </source>
</evidence>
<feature type="chain" id="PRO_1000059601" description="Chaperone protein DnaK">
    <location>
        <begin position="1"/>
        <end position="640"/>
    </location>
</feature>
<feature type="region of interest" description="Disordered" evidence="2">
    <location>
        <begin position="603"/>
        <end position="640"/>
    </location>
</feature>
<feature type="compositionally biased region" description="Acidic residues" evidence="2">
    <location>
        <begin position="626"/>
        <end position="640"/>
    </location>
</feature>
<feature type="modified residue" description="Phosphothreonine; by autocatalysis" evidence="1">
    <location>
        <position position="199"/>
    </location>
</feature>
<comment type="function">
    <text evidence="1">Acts as a chaperone.</text>
</comment>
<comment type="induction">
    <text evidence="1">By stress conditions e.g. heat shock.</text>
</comment>
<comment type="similarity">
    <text evidence="1">Belongs to the heat shock protein 70 family.</text>
</comment>
<accession>Q1H3B8</accession>
<sequence length="640" mass="69317">MGKIIGIDLGTTNSCVAVMEGGKPRVIENAEGARTTPSVIAYQEDGEILVGAPAKRQAVTNPKNTLFAVKRLIGRRFDEKEVQKDIGLMPYTITKADNGDAWVEVRGQKLAPPQISAEVLRKMKKTAEDYLGEEVTEAVITVPAYFNDSQRQATKDAGRIAGLEVKRIINEPTAAALAFGLDKQEGDRKIAVYDLGGGTFDISIIEISEIDGEHQFEVLSTNGDTFLGGEDFDNRLIDFLADEFKKENGIDLRNDLLAKQRLKEAAEKAKIELSSSTQTEVNLPYITADASGPKHLVVKITRAKFESLVEDLIERSIKPCEVALKDAGVKVSDIQDVILVGGQTRMPKVQEKVKEFFGKEPRKDVNPDEAVAVGAAIQGGVLQGDVKDVLLLDVTPLSLGIETLGGVMTKLIQKNTTIPTKASQVFSTAEDNQSAVTIHVLQGEREMASGNKSLGQFNLTDIPPAPRGMPQIEVTFDIDANGILHVSAKDKATGKENKITIKANSGLSDEEIKRMEEEAAKYADEDKKLRELVDARNSADSAIHSVKKSLAEHGDKLDAAEKGAIEKAVQELEDVIKGDDKAAIESKTNALIEASQKLGEKVYAAGETESSAAEPGEPQEKTVDAEVVDAEFEEVKDDKK</sequence>
<gene>
    <name evidence="1" type="primary">dnaK</name>
    <name type="ordered locus">Mfla_0751</name>
</gene>
<name>DNAK_METFK</name>
<reference key="1">
    <citation type="submission" date="2006-03" db="EMBL/GenBank/DDBJ databases">
        <title>Complete sequence of Methylobacillus flagellatus KT.</title>
        <authorList>
            <consortium name="US DOE Joint Genome Institute"/>
            <person name="Copeland A."/>
            <person name="Lucas S."/>
            <person name="Lapidus A."/>
            <person name="Barry K."/>
            <person name="Detter J.C."/>
            <person name="Glavina del Rio T."/>
            <person name="Hammon N."/>
            <person name="Israni S."/>
            <person name="Dalin E."/>
            <person name="Tice H."/>
            <person name="Pitluck S."/>
            <person name="Brettin T."/>
            <person name="Bruce D."/>
            <person name="Han C."/>
            <person name="Tapia R."/>
            <person name="Saunders E."/>
            <person name="Gilna P."/>
            <person name="Schmutz J."/>
            <person name="Larimer F."/>
            <person name="Land M."/>
            <person name="Kyrpides N."/>
            <person name="Anderson I."/>
            <person name="Richardson P."/>
        </authorList>
    </citation>
    <scope>NUCLEOTIDE SEQUENCE [LARGE SCALE GENOMIC DNA]</scope>
    <source>
        <strain>ATCC 51484 / DSM 6875 / VKM B-1610 / KT</strain>
    </source>
</reference>
<protein>
    <recommendedName>
        <fullName evidence="1">Chaperone protein DnaK</fullName>
    </recommendedName>
    <alternativeName>
        <fullName evidence="1">HSP70</fullName>
    </alternativeName>
    <alternativeName>
        <fullName evidence="1">Heat shock 70 kDa protein</fullName>
    </alternativeName>
    <alternativeName>
        <fullName evidence="1">Heat shock protein 70</fullName>
    </alternativeName>
</protein>
<proteinExistence type="inferred from homology"/>
<organism>
    <name type="scientific">Methylobacillus flagellatus (strain ATCC 51484 / DSM 6875 / VKM B-1610 / KT)</name>
    <dbReference type="NCBI Taxonomy" id="265072"/>
    <lineage>
        <taxon>Bacteria</taxon>
        <taxon>Pseudomonadati</taxon>
        <taxon>Pseudomonadota</taxon>
        <taxon>Betaproteobacteria</taxon>
        <taxon>Nitrosomonadales</taxon>
        <taxon>Methylophilaceae</taxon>
        <taxon>Methylobacillus</taxon>
    </lineage>
</organism>
<keyword id="KW-0067">ATP-binding</keyword>
<keyword id="KW-0143">Chaperone</keyword>
<keyword id="KW-0547">Nucleotide-binding</keyword>
<keyword id="KW-0597">Phosphoprotein</keyword>
<keyword id="KW-1185">Reference proteome</keyword>
<keyword id="KW-0346">Stress response</keyword>